<comment type="similarity">
    <text evidence="1">Belongs to the UPF0253 family.</text>
</comment>
<comment type="sequence caution" evidence="2">
    <conflict type="erroneous initiation">
        <sequence resource="EMBL-CDS" id="AAO67969"/>
    </conflict>
</comment>
<comment type="sequence caution" evidence="2">
    <conflict type="erroneous initiation">
        <sequence resource="EMBL-CDS" id="CAD08697"/>
    </conflict>
</comment>
<feature type="chain" id="PRO_0000215543" description="UPF0253 protein YaeP">
    <location>
        <begin position="1"/>
        <end position="66"/>
    </location>
</feature>
<evidence type="ECO:0000255" key="1">
    <source>
        <dbReference type="HAMAP-Rule" id="MF_01064"/>
    </source>
</evidence>
<evidence type="ECO:0000305" key="2"/>
<gene>
    <name evidence="1" type="primary">yaeP</name>
    <name type="ordered locus">STY0263</name>
    <name type="ordered locus">t0240</name>
</gene>
<proteinExistence type="inferred from homology"/>
<protein>
    <recommendedName>
        <fullName evidence="1">UPF0253 protein YaeP</fullName>
    </recommendedName>
</protein>
<organism>
    <name type="scientific">Salmonella typhi</name>
    <dbReference type="NCBI Taxonomy" id="90370"/>
    <lineage>
        <taxon>Bacteria</taxon>
        <taxon>Pseudomonadati</taxon>
        <taxon>Pseudomonadota</taxon>
        <taxon>Gammaproteobacteria</taxon>
        <taxon>Enterobacterales</taxon>
        <taxon>Enterobacteriaceae</taxon>
        <taxon>Salmonella</taxon>
    </lineage>
</organism>
<reference key="1">
    <citation type="journal article" date="2001" name="Nature">
        <title>Complete genome sequence of a multiple drug resistant Salmonella enterica serovar Typhi CT18.</title>
        <authorList>
            <person name="Parkhill J."/>
            <person name="Dougan G."/>
            <person name="James K.D."/>
            <person name="Thomson N.R."/>
            <person name="Pickard D."/>
            <person name="Wain J."/>
            <person name="Churcher C.M."/>
            <person name="Mungall K.L."/>
            <person name="Bentley S.D."/>
            <person name="Holden M.T.G."/>
            <person name="Sebaihia M."/>
            <person name="Baker S."/>
            <person name="Basham D."/>
            <person name="Brooks K."/>
            <person name="Chillingworth T."/>
            <person name="Connerton P."/>
            <person name="Cronin A."/>
            <person name="Davis P."/>
            <person name="Davies R.M."/>
            <person name="Dowd L."/>
            <person name="White N."/>
            <person name="Farrar J."/>
            <person name="Feltwell T."/>
            <person name="Hamlin N."/>
            <person name="Haque A."/>
            <person name="Hien T.T."/>
            <person name="Holroyd S."/>
            <person name="Jagels K."/>
            <person name="Krogh A."/>
            <person name="Larsen T.S."/>
            <person name="Leather S."/>
            <person name="Moule S."/>
            <person name="O'Gaora P."/>
            <person name="Parry C."/>
            <person name="Quail M.A."/>
            <person name="Rutherford K.M."/>
            <person name="Simmonds M."/>
            <person name="Skelton J."/>
            <person name="Stevens K."/>
            <person name="Whitehead S."/>
            <person name="Barrell B.G."/>
        </authorList>
    </citation>
    <scope>NUCLEOTIDE SEQUENCE [LARGE SCALE GENOMIC DNA]</scope>
    <source>
        <strain>CT18</strain>
    </source>
</reference>
<reference key="2">
    <citation type="journal article" date="2003" name="J. Bacteriol.">
        <title>Comparative genomics of Salmonella enterica serovar Typhi strains Ty2 and CT18.</title>
        <authorList>
            <person name="Deng W."/>
            <person name="Liou S.-R."/>
            <person name="Plunkett G. III"/>
            <person name="Mayhew G.F."/>
            <person name="Rose D.J."/>
            <person name="Burland V."/>
            <person name="Kodoyianni V."/>
            <person name="Schwartz D.C."/>
            <person name="Blattner F.R."/>
        </authorList>
    </citation>
    <scope>NUCLEOTIDE SEQUENCE [LARGE SCALE GENOMIC DNA]</scope>
    <source>
        <strain>ATCC 700931 / Ty2</strain>
    </source>
</reference>
<sequence length="66" mass="7156">MEKYCELVRKRYAEIASGDLGYVPDALGCVLKVLNEVAADSALSESVREKAAYAAANLLVSDYVNE</sequence>
<dbReference type="EMBL" id="AL513382">
    <property type="protein sequence ID" value="CAD08697.1"/>
    <property type="status" value="ALT_INIT"/>
    <property type="molecule type" value="Genomic_DNA"/>
</dbReference>
<dbReference type="EMBL" id="AE014613">
    <property type="protein sequence ID" value="AAO67969.1"/>
    <property type="status" value="ALT_INIT"/>
    <property type="molecule type" value="Genomic_DNA"/>
</dbReference>
<dbReference type="RefSeq" id="NP_454846.1">
    <property type="nucleotide sequence ID" value="NC_003198.1"/>
</dbReference>
<dbReference type="RefSeq" id="WP_001518678.1">
    <property type="nucleotide sequence ID" value="NZ_WSUR01000060.1"/>
</dbReference>
<dbReference type="SMR" id="P67552"/>
<dbReference type="STRING" id="220341.gene:17584295"/>
<dbReference type="KEGG" id="stt:t0240"/>
<dbReference type="KEGG" id="sty:STY0263"/>
<dbReference type="PATRIC" id="fig|220341.7.peg.264"/>
<dbReference type="eggNOG" id="ENOG5032Z3X">
    <property type="taxonomic scope" value="Bacteria"/>
</dbReference>
<dbReference type="HOGENOM" id="CLU_190008_0_0_6"/>
<dbReference type="OMA" id="CVLKTLD"/>
<dbReference type="Proteomes" id="UP000000541">
    <property type="component" value="Chromosome"/>
</dbReference>
<dbReference type="Proteomes" id="UP000002670">
    <property type="component" value="Chromosome"/>
</dbReference>
<dbReference type="HAMAP" id="MF_01064">
    <property type="entry name" value="UPF0253"/>
    <property type="match status" value="1"/>
</dbReference>
<dbReference type="InterPro" id="IPR009624">
    <property type="entry name" value="UPF0253"/>
</dbReference>
<dbReference type="NCBIfam" id="NF003436">
    <property type="entry name" value="PRK04964.1"/>
    <property type="match status" value="1"/>
</dbReference>
<dbReference type="Pfam" id="PF06786">
    <property type="entry name" value="UPF0253"/>
    <property type="match status" value="1"/>
</dbReference>
<name>YAEP_SALTI</name>
<accession>P67552</accession>
<accession>Q8XGR8</accession>